<keyword id="KW-0997">Cell inner membrane</keyword>
<keyword id="KW-1003">Cell membrane</keyword>
<keyword id="KW-0472">Membrane</keyword>
<keyword id="KW-0653">Protein transport</keyword>
<keyword id="KW-1185">Reference proteome</keyword>
<keyword id="KW-0811">Translocation</keyword>
<keyword id="KW-0812">Transmembrane</keyword>
<keyword id="KW-1133">Transmembrane helix</keyword>
<keyword id="KW-0813">Transport</keyword>
<organism>
    <name type="scientific">Afipia carboxidovorans (strain ATCC 49405 / DSM 1227 / KCTC 32145 / OM5)</name>
    <name type="common">Oligotropha carboxidovorans</name>
    <dbReference type="NCBI Taxonomy" id="504832"/>
    <lineage>
        <taxon>Bacteria</taxon>
        <taxon>Pseudomonadati</taxon>
        <taxon>Pseudomonadota</taxon>
        <taxon>Alphaproteobacteria</taxon>
        <taxon>Hyphomicrobiales</taxon>
        <taxon>Nitrobacteraceae</taxon>
        <taxon>Afipia</taxon>
    </lineage>
</organism>
<comment type="function">
    <text evidence="1">Part of the twin-arginine translocation (Tat) system that transports large folded proteins containing a characteristic twin-arginine motif in their signal peptide across membranes. TatA could form the protein-conducting channel of the Tat system.</text>
</comment>
<comment type="subunit">
    <text evidence="1">The Tat system comprises two distinct complexes: a TatABC complex, containing multiple copies of TatA, TatB and TatC subunits, and a separate TatA complex, containing only TatA subunits. Substrates initially bind to the TatABC complex, which probably triggers association of the separate TatA complex to form the active translocon.</text>
</comment>
<comment type="subcellular location">
    <subcellularLocation>
        <location evidence="1">Cell inner membrane</location>
        <topology evidence="1">Single-pass membrane protein</topology>
    </subcellularLocation>
</comment>
<comment type="similarity">
    <text evidence="1">Belongs to the TatA/E family.</text>
</comment>
<reference key="1">
    <citation type="journal article" date="2008" name="J. Bacteriol.">
        <title>Genome sequence of the chemolithoautotrophic bacterium Oligotropha carboxidovorans OM5T.</title>
        <authorList>
            <person name="Paul D."/>
            <person name="Bridges S."/>
            <person name="Burgess S.C."/>
            <person name="Dandass Y."/>
            <person name="Lawrence M.L."/>
        </authorList>
    </citation>
    <scope>NUCLEOTIDE SEQUENCE [LARGE SCALE GENOMIC DNA]</scope>
    <source>
        <strain>ATCC 49405 / DSM 1227 / KCTC 32145 / OM5</strain>
    </source>
</reference>
<reference key="2">
    <citation type="journal article" date="2011" name="J. Bacteriol.">
        <title>Complete genome sequences of the chemolithoautotrophic Oligotropha carboxidovorans strains OM4 and OM5.</title>
        <authorList>
            <person name="Volland S."/>
            <person name="Rachinger M."/>
            <person name="Strittmatter A."/>
            <person name="Daniel R."/>
            <person name="Gottschalk G."/>
            <person name="Meyer O."/>
        </authorList>
    </citation>
    <scope>NUCLEOTIDE SEQUENCE [LARGE SCALE GENOMIC DNA]</scope>
    <source>
        <strain>ATCC 49405 / DSM 1227 / KCTC 32145 / OM5</strain>
    </source>
</reference>
<sequence>MGLSFQHILILLVVVLLLFGRNKISDLMGDFAKGIKAFKKGMSDDEVETAKSDSIKTIDNTGKPTNVQANPQRQDSTV</sequence>
<dbReference type="EMBL" id="CP001196">
    <property type="protein sequence ID" value="ACI93380.1"/>
    <property type="molecule type" value="Genomic_DNA"/>
</dbReference>
<dbReference type="EMBL" id="CP002826">
    <property type="protein sequence ID" value="AEI06479.1"/>
    <property type="molecule type" value="Genomic_DNA"/>
</dbReference>
<dbReference type="RefSeq" id="WP_012563406.1">
    <property type="nucleotide sequence ID" value="NC_015684.1"/>
</dbReference>
<dbReference type="SMR" id="B6JFP6"/>
<dbReference type="STRING" id="504832.OCA5_c17650"/>
<dbReference type="KEGG" id="oca:OCAR_6267"/>
<dbReference type="KEGG" id="ocg:OCA5_c17650"/>
<dbReference type="PATRIC" id="fig|504832.7.peg.1889"/>
<dbReference type="eggNOG" id="COG1826">
    <property type="taxonomic scope" value="Bacteria"/>
</dbReference>
<dbReference type="HOGENOM" id="CLU_086034_5_0_5"/>
<dbReference type="OrthoDB" id="7161179at2"/>
<dbReference type="Proteomes" id="UP000007730">
    <property type="component" value="Chromosome"/>
</dbReference>
<dbReference type="GO" id="GO:0033281">
    <property type="term" value="C:TAT protein transport complex"/>
    <property type="evidence" value="ECO:0007669"/>
    <property type="project" value="UniProtKB-UniRule"/>
</dbReference>
<dbReference type="GO" id="GO:0008320">
    <property type="term" value="F:protein transmembrane transporter activity"/>
    <property type="evidence" value="ECO:0007669"/>
    <property type="project" value="UniProtKB-UniRule"/>
</dbReference>
<dbReference type="GO" id="GO:0043953">
    <property type="term" value="P:protein transport by the Tat complex"/>
    <property type="evidence" value="ECO:0007669"/>
    <property type="project" value="UniProtKB-UniRule"/>
</dbReference>
<dbReference type="Gene3D" id="1.20.5.3310">
    <property type="match status" value="1"/>
</dbReference>
<dbReference type="HAMAP" id="MF_00236">
    <property type="entry name" value="TatA_E"/>
    <property type="match status" value="1"/>
</dbReference>
<dbReference type="InterPro" id="IPR003369">
    <property type="entry name" value="TatA/B/E"/>
</dbReference>
<dbReference type="InterPro" id="IPR006312">
    <property type="entry name" value="TatA/E"/>
</dbReference>
<dbReference type="NCBIfam" id="NF001940">
    <property type="entry name" value="PRK00720.1"/>
    <property type="match status" value="1"/>
</dbReference>
<dbReference type="NCBIfam" id="TIGR01411">
    <property type="entry name" value="tatAE"/>
    <property type="match status" value="1"/>
</dbReference>
<dbReference type="PANTHER" id="PTHR42982">
    <property type="entry name" value="SEC-INDEPENDENT PROTEIN TRANSLOCASE PROTEIN TATA"/>
    <property type="match status" value="1"/>
</dbReference>
<dbReference type="PANTHER" id="PTHR42982:SF1">
    <property type="entry name" value="SEC-INDEPENDENT PROTEIN TRANSLOCASE PROTEIN TATA"/>
    <property type="match status" value="1"/>
</dbReference>
<dbReference type="Pfam" id="PF02416">
    <property type="entry name" value="TatA_B_E"/>
    <property type="match status" value="1"/>
</dbReference>
<protein>
    <recommendedName>
        <fullName evidence="1">Sec-independent protein translocase protein TatA</fullName>
    </recommendedName>
</protein>
<name>TATA_AFIC5</name>
<proteinExistence type="inferred from homology"/>
<feature type="chain" id="PRO_1000197888" description="Sec-independent protein translocase protein TatA">
    <location>
        <begin position="1"/>
        <end position="78"/>
    </location>
</feature>
<feature type="transmembrane region" description="Helical" evidence="1">
    <location>
        <begin position="4"/>
        <end position="21"/>
    </location>
</feature>
<feature type="region of interest" description="Disordered" evidence="2">
    <location>
        <begin position="49"/>
        <end position="78"/>
    </location>
</feature>
<feature type="compositionally biased region" description="Polar residues" evidence="2">
    <location>
        <begin position="57"/>
        <end position="78"/>
    </location>
</feature>
<gene>
    <name evidence="1" type="primary">tatA</name>
    <name type="ordered locus">OCAR_6267</name>
    <name type="ordered locus">OCA5_c17650</name>
</gene>
<accession>B6JFP6</accession>
<accession>F8BSD8</accession>
<evidence type="ECO:0000255" key="1">
    <source>
        <dbReference type="HAMAP-Rule" id="MF_00236"/>
    </source>
</evidence>
<evidence type="ECO:0000256" key="2">
    <source>
        <dbReference type="SAM" id="MobiDB-lite"/>
    </source>
</evidence>